<protein>
    <recommendedName>
        <fullName evidence="1">Dephospho-CoA kinase</fullName>
        <ecNumber evidence="1">2.7.1.24</ecNumber>
    </recommendedName>
    <alternativeName>
        <fullName evidence="1">Dephosphocoenzyme A kinase</fullName>
    </alternativeName>
</protein>
<sequence>MLAIGITGSYASGKTFILNYLSAKGYKTFCADRCIKELYKDIVLQTQILKILPELEYFNIRKISNLIYNNDIAREKLQNFIYPLLIDKLILFKKENTNYKLAFSEIPLLYEAKFEQYFDFVVTIYCSEEIRMQRAITRAEFDINIYNKIKEIQLSQESKIAKADFSINSGVDMLDLEKQITKLIKDLECRV</sequence>
<gene>
    <name evidence="1" type="primary">coaE</name>
    <name type="ordered locus">RP731</name>
</gene>
<proteinExistence type="inferred from homology"/>
<accession>Q9ZCK0</accession>
<comment type="function">
    <text evidence="1">Catalyzes the phosphorylation of the 3'-hydroxyl group of dephosphocoenzyme A to form coenzyme A.</text>
</comment>
<comment type="catalytic activity">
    <reaction evidence="1">
        <text>3'-dephospho-CoA + ATP = ADP + CoA + H(+)</text>
        <dbReference type="Rhea" id="RHEA:18245"/>
        <dbReference type="ChEBI" id="CHEBI:15378"/>
        <dbReference type="ChEBI" id="CHEBI:30616"/>
        <dbReference type="ChEBI" id="CHEBI:57287"/>
        <dbReference type="ChEBI" id="CHEBI:57328"/>
        <dbReference type="ChEBI" id="CHEBI:456216"/>
        <dbReference type="EC" id="2.7.1.24"/>
    </reaction>
</comment>
<comment type="pathway">
    <text evidence="1">Cofactor biosynthesis; coenzyme A biosynthesis; CoA from (R)-pantothenate: step 5/5.</text>
</comment>
<comment type="subcellular location">
    <subcellularLocation>
        <location evidence="1">Cytoplasm</location>
    </subcellularLocation>
</comment>
<comment type="similarity">
    <text evidence="1 2">Belongs to the CoaE family.</text>
</comment>
<keyword id="KW-0067">ATP-binding</keyword>
<keyword id="KW-0173">Coenzyme A biosynthesis</keyword>
<keyword id="KW-0963">Cytoplasm</keyword>
<keyword id="KW-0418">Kinase</keyword>
<keyword id="KW-0547">Nucleotide-binding</keyword>
<keyword id="KW-1185">Reference proteome</keyword>
<keyword id="KW-0808">Transferase</keyword>
<organism>
    <name type="scientific">Rickettsia prowazekii (strain Madrid E)</name>
    <dbReference type="NCBI Taxonomy" id="272947"/>
    <lineage>
        <taxon>Bacteria</taxon>
        <taxon>Pseudomonadati</taxon>
        <taxon>Pseudomonadota</taxon>
        <taxon>Alphaproteobacteria</taxon>
        <taxon>Rickettsiales</taxon>
        <taxon>Rickettsiaceae</taxon>
        <taxon>Rickettsieae</taxon>
        <taxon>Rickettsia</taxon>
        <taxon>typhus group</taxon>
    </lineage>
</organism>
<dbReference type="EC" id="2.7.1.24" evidence="1"/>
<dbReference type="EMBL" id="AJ235273">
    <property type="protein sequence ID" value="CAA15160.1"/>
    <property type="molecule type" value="Genomic_DNA"/>
</dbReference>
<dbReference type="PIR" id="H71632">
    <property type="entry name" value="H71632"/>
</dbReference>
<dbReference type="RefSeq" id="NP_221084.1">
    <property type="nucleotide sequence ID" value="NC_000963.1"/>
</dbReference>
<dbReference type="RefSeq" id="WP_004597038.1">
    <property type="nucleotide sequence ID" value="NC_000963.1"/>
</dbReference>
<dbReference type="SMR" id="Q9ZCK0"/>
<dbReference type="STRING" id="272947.gene:17555801"/>
<dbReference type="EnsemblBacteria" id="CAA15160">
    <property type="protein sequence ID" value="CAA15160"/>
    <property type="gene ID" value="CAA15160"/>
</dbReference>
<dbReference type="GeneID" id="57569852"/>
<dbReference type="KEGG" id="rpr:RP731"/>
<dbReference type="PATRIC" id="fig|272947.5.peg.765"/>
<dbReference type="eggNOG" id="COG0237">
    <property type="taxonomic scope" value="Bacteria"/>
</dbReference>
<dbReference type="HOGENOM" id="CLU_057180_3_1_5"/>
<dbReference type="OrthoDB" id="9812943at2"/>
<dbReference type="UniPathway" id="UPA00241">
    <property type="reaction ID" value="UER00356"/>
</dbReference>
<dbReference type="Proteomes" id="UP000002480">
    <property type="component" value="Chromosome"/>
</dbReference>
<dbReference type="GO" id="GO:0005737">
    <property type="term" value="C:cytoplasm"/>
    <property type="evidence" value="ECO:0007669"/>
    <property type="project" value="UniProtKB-SubCell"/>
</dbReference>
<dbReference type="GO" id="GO:0005524">
    <property type="term" value="F:ATP binding"/>
    <property type="evidence" value="ECO:0007669"/>
    <property type="project" value="UniProtKB-UniRule"/>
</dbReference>
<dbReference type="GO" id="GO:0004140">
    <property type="term" value="F:dephospho-CoA kinase activity"/>
    <property type="evidence" value="ECO:0007669"/>
    <property type="project" value="UniProtKB-UniRule"/>
</dbReference>
<dbReference type="GO" id="GO:0015937">
    <property type="term" value="P:coenzyme A biosynthetic process"/>
    <property type="evidence" value="ECO:0007669"/>
    <property type="project" value="UniProtKB-UniRule"/>
</dbReference>
<dbReference type="CDD" id="cd02022">
    <property type="entry name" value="DPCK"/>
    <property type="match status" value="1"/>
</dbReference>
<dbReference type="Gene3D" id="3.40.50.300">
    <property type="entry name" value="P-loop containing nucleotide triphosphate hydrolases"/>
    <property type="match status" value="1"/>
</dbReference>
<dbReference type="HAMAP" id="MF_00376">
    <property type="entry name" value="Dephospho_CoA_kinase"/>
    <property type="match status" value="1"/>
</dbReference>
<dbReference type="InterPro" id="IPR001977">
    <property type="entry name" value="Depp_CoAkinase"/>
</dbReference>
<dbReference type="InterPro" id="IPR027417">
    <property type="entry name" value="P-loop_NTPase"/>
</dbReference>
<dbReference type="NCBIfam" id="TIGR00152">
    <property type="entry name" value="dephospho-CoA kinase"/>
    <property type="match status" value="1"/>
</dbReference>
<dbReference type="Pfam" id="PF01121">
    <property type="entry name" value="CoaE"/>
    <property type="match status" value="1"/>
</dbReference>
<dbReference type="SUPFAM" id="SSF52540">
    <property type="entry name" value="P-loop containing nucleoside triphosphate hydrolases"/>
    <property type="match status" value="1"/>
</dbReference>
<dbReference type="PROSITE" id="PS51219">
    <property type="entry name" value="DPCK"/>
    <property type="match status" value="1"/>
</dbReference>
<evidence type="ECO:0000255" key="1">
    <source>
        <dbReference type="HAMAP-Rule" id="MF_00376"/>
    </source>
</evidence>
<evidence type="ECO:0000305" key="2"/>
<reference key="1">
    <citation type="journal article" date="1998" name="Nature">
        <title>The genome sequence of Rickettsia prowazekii and the origin of mitochondria.</title>
        <authorList>
            <person name="Andersson S.G.E."/>
            <person name="Zomorodipour A."/>
            <person name="Andersson J.O."/>
            <person name="Sicheritz-Ponten T."/>
            <person name="Alsmark U.C.M."/>
            <person name="Podowski R.M."/>
            <person name="Naeslund A.K."/>
            <person name="Eriksson A.-S."/>
            <person name="Winkler H.H."/>
            <person name="Kurland C.G."/>
        </authorList>
    </citation>
    <scope>NUCLEOTIDE SEQUENCE [LARGE SCALE GENOMIC DNA]</scope>
    <source>
        <strain>Madrid E</strain>
    </source>
</reference>
<name>COAE_RICPR</name>
<feature type="chain" id="PRO_0000172992" description="Dephospho-CoA kinase">
    <location>
        <begin position="1"/>
        <end position="191"/>
    </location>
</feature>
<feature type="domain" description="DPCK" evidence="1">
    <location>
        <begin position="3"/>
        <end position="191"/>
    </location>
</feature>
<feature type="binding site" evidence="1">
    <location>
        <begin position="11"/>
        <end position="16"/>
    </location>
    <ligand>
        <name>ATP</name>
        <dbReference type="ChEBI" id="CHEBI:30616"/>
    </ligand>
</feature>